<proteinExistence type="inferred from homology"/>
<gene>
    <name evidence="1" type="primary">pheS</name>
    <name type="ordered locus">bll0706</name>
</gene>
<name>SYFA_BRADU</name>
<dbReference type="EC" id="6.1.1.20" evidence="1"/>
<dbReference type="EMBL" id="BA000040">
    <property type="protein sequence ID" value="BAC45971.1"/>
    <property type="molecule type" value="Genomic_DNA"/>
</dbReference>
<dbReference type="RefSeq" id="NP_767346.1">
    <property type="nucleotide sequence ID" value="NC_004463.1"/>
</dbReference>
<dbReference type="RefSeq" id="WP_011083532.1">
    <property type="nucleotide sequence ID" value="NC_004463.1"/>
</dbReference>
<dbReference type="SMR" id="Q89WI1"/>
<dbReference type="FunCoup" id="Q89WI1">
    <property type="interactions" value="693"/>
</dbReference>
<dbReference type="STRING" id="224911.AAV28_00365"/>
<dbReference type="EnsemblBacteria" id="BAC45971">
    <property type="protein sequence ID" value="BAC45971"/>
    <property type="gene ID" value="BAC45971"/>
</dbReference>
<dbReference type="GeneID" id="46487979"/>
<dbReference type="KEGG" id="bja:bll0706"/>
<dbReference type="PATRIC" id="fig|224911.44.peg.76"/>
<dbReference type="eggNOG" id="COG0016">
    <property type="taxonomic scope" value="Bacteria"/>
</dbReference>
<dbReference type="HOGENOM" id="CLU_025086_0_1_5"/>
<dbReference type="InParanoid" id="Q89WI1"/>
<dbReference type="OrthoDB" id="9800719at2"/>
<dbReference type="PhylomeDB" id="Q89WI1"/>
<dbReference type="Proteomes" id="UP000002526">
    <property type="component" value="Chromosome"/>
</dbReference>
<dbReference type="GO" id="GO:0005737">
    <property type="term" value="C:cytoplasm"/>
    <property type="evidence" value="ECO:0000318"/>
    <property type="project" value="GO_Central"/>
</dbReference>
<dbReference type="GO" id="GO:0005524">
    <property type="term" value="F:ATP binding"/>
    <property type="evidence" value="ECO:0007669"/>
    <property type="project" value="UniProtKB-UniRule"/>
</dbReference>
<dbReference type="GO" id="GO:0000287">
    <property type="term" value="F:magnesium ion binding"/>
    <property type="evidence" value="ECO:0007669"/>
    <property type="project" value="UniProtKB-UniRule"/>
</dbReference>
<dbReference type="GO" id="GO:0004826">
    <property type="term" value="F:phenylalanine-tRNA ligase activity"/>
    <property type="evidence" value="ECO:0000318"/>
    <property type="project" value="GO_Central"/>
</dbReference>
<dbReference type="GO" id="GO:0000049">
    <property type="term" value="F:tRNA binding"/>
    <property type="evidence" value="ECO:0007669"/>
    <property type="project" value="InterPro"/>
</dbReference>
<dbReference type="GO" id="GO:0006432">
    <property type="term" value="P:phenylalanyl-tRNA aminoacylation"/>
    <property type="evidence" value="ECO:0000318"/>
    <property type="project" value="GO_Central"/>
</dbReference>
<dbReference type="CDD" id="cd00496">
    <property type="entry name" value="PheRS_alpha_core"/>
    <property type="match status" value="1"/>
</dbReference>
<dbReference type="FunFam" id="3.30.930.10:FF:000003">
    <property type="entry name" value="Phenylalanine--tRNA ligase alpha subunit"/>
    <property type="match status" value="1"/>
</dbReference>
<dbReference type="Gene3D" id="3.30.930.10">
    <property type="entry name" value="Bira Bifunctional Protein, Domain 2"/>
    <property type="match status" value="1"/>
</dbReference>
<dbReference type="HAMAP" id="MF_00281">
    <property type="entry name" value="Phe_tRNA_synth_alpha1"/>
    <property type="match status" value="1"/>
</dbReference>
<dbReference type="InterPro" id="IPR006195">
    <property type="entry name" value="aa-tRNA-synth_II"/>
</dbReference>
<dbReference type="InterPro" id="IPR045864">
    <property type="entry name" value="aa-tRNA-synth_II/BPL/LPL"/>
</dbReference>
<dbReference type="InterPro" id="IPR004529">
    <property type="entry name" value="Phe-tRNA-synth_IIc_asu"/>
</dbReference>
<dbReference type="InterPro" id="IPR004188">
    <property type="entry name" value="Phe-tRNA_ligase_II_N"/>
</dbReference>
<dbReference type="InterPro" id="IPR022911">
    <property type="entry name" value="Phe_tRNA_ligase_alpha1_bac"/>
</dbReference>
<dbReference type="InterPro" id="IPR002319">
    <property type="entry name" value="Phenylalanyl-tRNA_Synthase"/>
</dbReference>
<dbReference type="InterPro" id="IPR010978">
    <property type="entry name" value="tRNA-bd_arm"/>
</dbReference>
<dbReference type="NCBIfam" id="TIGR00468">
    <property type="entry name" value="pheS"/>
    <property type="match status" value="1"/>
</dbReference>
<dbReference type="PANTHER" id="PTHR11538:SF41">
    <property type="entry name" value="PHENYLALANINE--TRNA LIGASE, MITOCHONDRIAL"/>
    <property type="match status" value="1"/>
</dbReference>
<dbReference type="PANTHER" id="PTHR11538">
    <property type="entry name" value="PHENYLALANYL-TRNA SYNTHETASE"/>
    <property type="match status" value="1"/>
</dbReference>
<dbReference type="Pfam" id="PF02912">
    <property type="entry name" value="Phe_tRNA-synt_N"/>
    <property type="match status" value="1"/>
</dbReference>
<dbReference type="Pfam" id="PF01409">
    <property type="entry name" value="tRNA-synt_2d"/>
    <property type="match status" value="1"/>
</dbReference>
<dbReference type="SUPFAM" id="SSF55681">
    <property type="entry name" value="Class II aaRS and biotin synthetases"/>
    <property type="match status" value="1"/>
</dbReference>
<dbReference type="SUPFAM" id="SSF46589">
    <property type="entry name" value="tRNA-binding arm"/>
    <property type="match status" value="1"/>
</dbReference>
<dbReference type="PROSITE" id="PS50862">
    <property type="entry name" value="AA_TRNA_LIGASE_II"/>
    <property type="match status" value="1"/>
</dbReference>
<comment type="catalytic activity">
    <reaction evidence="1">
        <text>tRNA(Phe) + L-phenylalanine + ATP = L-phenylalanyl-tRNA(Phe) + AMP + diphosphate + H(+)</text>
        <dbReference type="Rhea" id="RHEA:19413"/>
        <dbReference type="Rhea" id="RHEA-COMP:9668"/>
        <dbReference type="Rhea" id="RHEA-COMP:9699"/>
        <dbReference type="ChEBI" id="CHEBI:15378"/>
        <dbReference type="ChEBI" id="CHEBI:30616"/>
        <dbReference type="ChEBI" id="CHEBI:33019"/>
        <dbReference type="ChEBI" id="CHEBI:58095"/>
        <dbReference type="ChEBI" id="CHEBI:78442"/>
        <dbReference type="ChEBI" id="CHEBI:78531"/>
        <dbReference type="ChEBI" id="CHEBI:456215"/>
        <dbReference type="EC" id="6.1.1.20"/>
    </reaction>
</comment>
<comment type="cofactor">
    <cofactor evidence="1">
        <name>Mg(2+)</name>
        <dbReference type="ChEBI" id="CHEBI:18420"/>
    </cofactor>
    <text evidence="1">Binds 2 magnesium ions per tetramer.</text>
</comment>
<comment type="subunit">
    <text evidence="1">Tetramer of two alpha and two beta subunits.</text>
</comment>
<comment type="subcellular location">
    <subcellularLocation>
        <location evidence="1">Cytoplasm</location>
    </subcellularLocation>
</comment>
<comment type="similarity">
    <text evidence="1">Belongs to the class-II aminoacyl-tRNA synthetase family. Phe-tRNA synthetase alpha subunit type 1 subfamily.</text>
</comment>
<organism>
    <name type="scientific">Bradyrhizobium diazoefficiens (strain JCM 10833 / BCRC 13528 / IAM 13628 / NBRC 14792 / USDA 110)</name>
    <dbReference type="NCBI Taxonomy" id="224911"/>
    <lineage>
        <taxon>Bacteria</taxon>
        <taxon>Pseudomonadati</taxon>
        <taxon>Pseudomonadota</taxon>
        <taxon>Alphaproteobacteria</taxon>
        <taxon>Hyphomicrobiales</taxon>
        <taxon>Nitrobacteraceae</taxon>
        <taxon>Bradyrhizobium</taxon>
    </lineage>
</organism>
<feature type="chain" id="PRO_0000126673" description="Phenylalanine--tRNA ligase alpha subunit">
    <location>
        <begin position="1"/>
        <end position="360"/>
    </location>
</feature>
<feature type="binding site" evidence="1">
    <location>
        <position position="260"/>
    </location>
    <ligand>
        <name>Mg(2+)</name>
        <dbReference type="ChEBI" id="CHEBI:18420"/>
        <note>shared with beta subunit</note>
    </ligand>
</feature>
<accession>Q89WI1</accession>
<evidence type="ECO:0000255" key="1">
    <source>
        <dbReference type="HAMAP-Rule" id="MF_00281"/>
    </source>
</evidence>
<reference key="1">
    <citation type="journal article" date="2002" name="DNA Res.">
        <title>Complete genomic sequence of nitrogen-fixing symbiotic bacterium Bradyrhizobium japonicum USDA110.</title>
        <authorList>
            <person name="Kaneko T."/>
            <person name="Nakamura Y."/>
            <person name="Sato S."/>
            <person name="Minamisawa K."/>
            <person name="Uchiumi T."/>
            <person name="Sasamoto S."/>
            <person name="Watanabe A."/>
            <person name="Idesawa K."/>
            <person name="Iriguchi M."/>
            <person name="Kawashima K."/>
            <person name="Kohara M."/>
            <person name="Matsumoto M."/>
            <person name="Shimpo S."/>
            <person name="Tsuruoka H."/>
            <person name="Wada T."/>
            <person name="Yamada M."/>
            <person name="Tabata S."/>
        </authorList>
    </citation>
    <scope>NUCLEOTIDE SEQUENCE [LARGE SCALE GENOMIC DNA]</scope>
    <source>
        <strain>JCM 10833 / BCRC 13528 / IAM 13628 / NBRC 14792 / USDA 110</strain>
    </source>
</reference>
<sequence>MSDLATLETSILDQVAAAGDEAALEAVRVAALGKKGSISALLATLGKMSPDDRKTQGAAINQAKDKVTEALAARRDVLKSAALDARLASETIDVTLPLREAPTDAGRIHPLSQVWDELTTIFADMGFSVAEGPDIETDDYNFTKLNFPEGHPAREMHDTFFFHPKEDGSRMLLRTHTSPVQVRTMLSQKPPIRVICPGRTYRIDSDATHTPQFHQVEGLVIDKHSHLGHLKWILHEFCKAFFEVDHINMRFRPSFFPFTEPSLEVDIQCRRDKGEIRFGEGEDWLEILGCGMVHPNVLRACGIDPDEYQGFAWGMGIDRIAMLKYGIADLRQLFDSDVRWLSHYGFKPLEVPTLAGGLSS</sequence>
<keyword id="KW-0030">Aminoacyl-tRNA synthetase</keyword>
<keyword id="KW-0067">ATP-binding</keyword>
<keyword id="KW-0963">Cytoplasm</keyword>
<keyword id="KW-0436">Ligase</keyword>
<keyword id="KW-0460">Magnesium</keyword>
<keyword id="KW-0479">Metal-binding</keyword>
<keyword id="KW-0547">Nucleotide-binding</keyword>
<keyword id="KW-0648">Protein biosynthesis</keyword>
<keyword id="KW-1185">Reference proteome</keyword>
<protein>
    <recommendedName>
        <fullName evidence="1">Phenylalanine--tRNA ligase alpha subunit</fullName>
        <ecNumber evidence="1">6.1.1.20</ecNumber>
    </recommendedName>
    <alternativeName>
        <fullName evidence="1">Phenylalanyl-tRNA synthetase alpha subunit</fullName>
        <shortName evidence="1">PheRS</shortName>
    </alternativeName>
</protein>